<proteinExistence type="inferred from homology"/>
<organism>
    <name type="scientific">Neisseria gonorrhoeae (strain ATCC 700825 / FA 1090)</name>
    <dbReference type="NCBI Taxonomy" id="242231"/>
    <lineage>
        <taxon>Bacteria</taxon>
        <taxon>Pseudomonadati</taxon>
        <taxon>Pseudomonadota</taxon>
        <taxon>Betaproteobacteria</taxon>
        <taxon>Neisseriales</taxon>
        <taxon>Neisseriaceae</taxon>
        <taxon>Neisseria</taxon>
    </lineage>
</organism>
<protein>
    <recommendedName>
        <fullName evidence="1">UPF0276 protein NGO_1946</fullName>
    </recommendedName>
</protein>
<keyword id="KW-1185">Reference proteome</keyword>
<gene>
    <name type="ordered locus">NGO_1946</name>
</gene>
<comment type="similarity">
    <text evidence="1">Belongs to the UPF0276 family.</text>
</comment>
<evidence type="ECO:0000255" key="1">
    <source>
        <dbReference type="HAMAP-Rule" id="MF_00697"/>
    </source>
</evidence>
<reference key="1">
    <citation type="submission" date="2003-03" db="EMBL/GenBank/DDBJ databases">
        <title>The complete genome sequence of Neisseria gonorrhoeae.</title>
        <authorList>
            <person name="Lewis L.A."/>
            <person name="Gillaspy A.F."/>
            <person name="McLaughlin R.E."/>
            <person name="Gipson M."/>
            <person name="Ducey T.F."/>
            <person name="Ownbey T."/>
            <person name="Hartman K."/>
            <person name="Nydick C."/>
            <person name="Carson M.B."/>
            <person name="Vaughn J."/>
            <person name="Thomson C."/>
            <person name="Song L."/>
            <person name="Lin S."/>
            <person name="Yuan X."/>
            <person name="Najar F."/>
            <person name="Zhan M."/>
            <person name="Ren Q."/>
            <person name="Zhu H."/>
            <person name="Qi S."/>
            <person name="Kenton S.M."/>
            <person name="Lai H."/>
            <person name="White J.D."/>
            <person name="Clifton S."/>
            <person name="Roe B.A."/>
            <person name="Dyer D.W."/>
        </authorList>
    </citation>
    <scope>NUCLEOTIDE SEQUENCE [LARGE SCALE GENOMIC DNA]</scope>
    <source>
        <strain>ATCC 700825 / FA 1090</strain>
    </source>
</reference>
<name>Y1946_NEIG1</name>
<dbReference type="EMBL" id="AE004969">
    <property type="protein sequence ID" value="AAW90558.1"/>
    <property type="molecule type" value="Genomic_DNA"/>
</dbReference>
<dbReference type="RefSeq" id="WP_010355671.1">
    <property type="nucleotide sequence ID" value="NC_002946.2"/>
</dbReference>
<dbReference type="RefSeq" id="YP_208970.1">
    <property type="nucleotide sequence ID" value="NC_002946.2"/>
</dbReference>
<dbReference type="SMR" id="Q5F5H9"/>
<dbReference type="STRING" id="242231.NGO_1946"/>
<dbReference type="KEGG" id="ngo:NGO_1946"/>
<dbReference type="PATRIC" id="fig|242231.10.peg.2345"/>
<dbReference type="HOGENOM" id="CLU_064263_0_0_4"/>
<dbReference type="Proteomes" id="UP000000535">
    <property type="component" value="Chromosome"/>
</dbReference>
<dbReference type="Gene3D" id="3.20.20.150">
    <property type="entry name" value="Divalent-metal-dependent TIM barrel enzymes"/>
    <property type="match status" value="1"/>
</dbReference>
<dbReference type="HAMAP" id="MF_00697">
    <property type="entry name" value="UPF0276"/>
    <property type="match status" value="1"/>
</dbReference>
<dbReference type="InterPro" id="IPR007801">
    <property type="entry name" value="MbnB/TglH/ChrH"/>
</dbReference>
<dbReference type="InterPro" id="IPR036237">
    <property type="entry name" value="Xyl_isomerase-like_sf"/>
</dbReference>
<dbReference type="NCBIfam" id="NF003818">
    <property type="entry name" value="PRK05409.1"/>
    <property type="match status" value="1"/>
</dbReference>
<dbReference type="PANTHER" id="PTHR42194">
    <property type="entry name" value="UPF0276 PROTEIN HI_1600"/>
    <property type="match status" value="1"/>
</dbReference>
<dbReference type="PANTHER" id="PTHR42194:SF1">
    <property type="entry name" value="UPF0276 PROTEIN HI_1600"/>
    <property type="match status" value="1"/>
</dbReference>
<dbReference type="Pfam" id="PF05114">
    <property type="entry name" value="MbnB_TglH_ChrH"/>
    <property type="match status" value="1"/>
</dbReference>
<dbReference type="SUPFAM" id="SSF51658">
    <property type="entry name" value="Xylose isomerase-like"/>
    <property type="match status" value="1"/>
</dbReference>
<feature type="chain" id="PRO_1000045471" description="UPF0276 protein NGO_1946">
    <location>
        <begin position="1"/>
        <end position="280"/>
    </location>
</feature>
<sequence>MIQHAGLGYRRDLAEDFLSLSENSPICFIEAAPENWLKMGGRARKQFDRVAERLPLALHGLSMSLGGQAPLDTDLIDGIKEMMCRYDCTFFSDHLSYCHDGGHLYDLLPLPFTEEMVHHTARRIREVQDRLGCRIAVENTSYYLHSPLAEMNEVEFLNAVAREADCGIHLDVNNIYVNAVNHGLLSPEAFLENVDAGRVCYIHIAGHDAETPELLIDTHGAAVLPTVWDLLELAYTKLPTIPPTLLERDFNFPPFAELEAEVAKIADYQTRAGKEYRRAA</sequence>
<accession>Q5F5H9</accession>